<proteinExistence type="inferred from homology"/>
<sequence>MRFLRFLKIFFTVIRFGLDEMMLSRVNDRRVRLLLRITTIGRKFDQPPGVRLRLALESLGPIFVKFGQVLSTRRDLLRPDIATELAKLQDQVPPFDSAVAIAIIEKSLGAPVDTIFDDFERVPVASASIAQVHFATLKIGQHAGKQVAVKVLRPNMLPVIDSDLALLRDIAVWAERLWADGKRLKPREVVAEFDKYLHDELDLMREAANGSQLRRNFAGLDLLLVPEMYWEYCTANVLVMERMVGVPISQVDTLRVAGVDIPKLAREGVEIFFTQVFRDGFFHADMHPGNIQVSLDPAHFGRYIALDFGIIGALSDFDKNYLAQNFLAFFKRDYHRVATLHLESGWVPATTRVEELESAIRAVCEPYFDRALKDISLGQVLMRLFSTSRRFNVEIQPQLVLLQKTMLNVEGLGRSLDPELDLWKTAKPYLERWMNEQIGAKGWYERLKIEAPQWSKTLPQLPRLIHHVLAQRHDAQQRGINDETIRQILLEQKRTNRLLQGLLMFGVAVGVGAVLARAWLAIAYGGY</sequence>
<comment type="function">
    <text evidence="1">Is probably a protein kinase regulator of UbiI activity which is involved in aerobic coenzyme Q (ubiquinone) biosynthesis.</text>
</comment>
<comment type="pathway">
    <text>Cofactor biosynthesis; ubiquinone biosynthesis [regulation].</text>
</comment>
<comment type="subcellular location">
    <subcellularLocation>
        <location evidence="1">Cell inner membrane</location>
        <topology evidence="1">Single-pass membrane protein</topology>
    </subcellularLocation>
</comment>
<comment type="similarity">
    <text evidence="1">Belongs to the ABC1 family. UbiB subfamily.</text>
</comment>
<feature type="chain" id="PRO_1000123897" description="Probable protein kinase UbiB">
    <location>
        <begin position="1"/>
        <end position="527"/>
    </location>
</feature>
<feature type="transmembrane region" description="Helical" evidence="1">
    <location>
        <begin position="502"/>
        <end position="522"/>
    </location>
</feature>
<feature type="domain" description="Protein kinase" evidence="1">
    <location>
        <begin position="118"/>
        <end position="501"/>
    </location>
</feature>
<feature type="active site" description="Proton acceptor" evidence="1">
    <location>
        <position position="285"/>
    </location>
</feature>
<feature type="binding site" evidence="1">
    <location>
        <begin position="124"/>
        <end position="132"/>
    </location>
    <ligand>
        <name>ATP</name>
        <dbReference type="ChEBI" id="CHEBI:30616"/>
    </ligand>
</feature>
<feature type="binding site" evidence="1">
    <location>
        <position position="150"/>
    </location>
    <ligand>
        <name>ATP</name>
        <dbReference type="ChEBI" id="CHEBI:30616"/>
    </ligand>
</feature>
<name>UBIB_PARP8</name>
<gene>
    <name evidence="1" type="primary">ubiB</name>
    <name type="ordered locus">Bphy_0377</name>
</gene>
<keyword id="KW-0067">ATP-binding</keyword>
<keyword id="KW-0997">Cell inner membrane</keyword>
<keyword id="KW-1003">Cell membrane</keyword>
<keyword id="KW-0418">Kinase</keyword>
<keyword id="KW-0472">Membrane</keyword>
<keyword id="KW-0547">Nucleotide-binding</keyword>
<keyword id="KW-1185">Reference proteome</keyword>
<keyword id="KW-0808">Transferase</keyword>
<keyword id="KW-0812">Transmembrane</keyword>
<keyword id="KW-1133">Transmembrane helix</keyword>
<keyword id="KW-0831">Ubiquinone biosynthesis</keyword>
<accession>B2JCV1</accession>
<reference key="1">
    <citation type="journal article" date="2014" name="Stand. Genomic Sci.">
        <title>Complete genome sequence of Burkholderia phymatum STM815(T), a broad host range and efficient nitrogen-fixing symbiont of Mimosa species.</title>
        <authorList>
            <person name="Moulin L."/>
            <person name="Klonowska A."/>
            <person name="Caroline B."/>
            <person name="Booth K."/>
            <person name="Vriezen J.A."/>
            <person name="Melkonian R."/>
            <person name="James E.K."/>
            <person name="Young J.P."/>
            <person name="Bena G."/>
            <person name="Hauser L."/>
            <person name="Land M."/>
            <person name="Kyrpides N."/>
            <person name="Bruce D."/>
            <person name="Chain P."/>
            <person name="Copeland A."/>
            <person name="Pitluck S."/>
            <person name="Woyke T."/>
            <person name="Lizotte-Waniewski M."/>
            <person name="Bristow J."/>
            <person name="Riley M."/>
        </authorList>
    </citation>
    <scope>NUCLEOTIDE SEQUENCE [LARGE SCALE GENOMIC DNA]</scope>
    <source>
        <strain>DSM 17167 / CIP 108236 / LMG 21445 / STM815</strain>
    </source>
</reference>
<dbReference type="EC" id="2.7.-.-" evidence="1"/>
<dbReference type="EMBL" id="CP001043">
    <property type="protein sequence ID" value="ACC69570.1"/>
    <property type="molecule type" value="Genomic_DNA"/>
</dbReference>
<dbReference type="RefSeq" id="WP_012399796.1">
    <property type="nucleotide sequence ID" value="NC_010622.1"/>
</dbReference>
<dbReference type="SMR" id="B2JCV1"/>
<dbReference type="STRING" id="391038.Bphy_0377"/>
<dbReference type="KEGG" id="bph:Bphy_0377"/>
<dbReference type="eggNOG" id="COG0661">
    <property type="taxonomic scope" value="Bacteria"/>
</dbReference>
<dbReference type="HOGENOM" id="CLU_006533_0_0_4"/>
<dbReference type="OrthoDB" id="9795390at2"/>
<dbReference type="UniPathway" id="UPA00232"/>
<dbReference type="Proteomes" id="UP000001192">
    <property type="component" value="Chromosome 1"/>
</dbReference>
<dbReference type="GO" id="GO:0005886">
    <property type="term" value="C:plasma membrane"/>
    <property type="evidence" value="ECO:0007669"/>
    <property type="project" value="UniProtKB-SubCell"/>
</dbReference>
<dbReference type="GO" id="GO:0005524">
    <property type="term" value="F:ATP binding"/>
    <property type="evidence" value="ECO:0007669"/>
    <property type="project" value="UniProtKB-KW"/>
</dbReference>
<dbReference type="GO" id="GO:0004672">
    <property type="term" value="F:protein kinase activity"/>
    <property type="evidence" value="ECO:0007669"/>
    <property type="project" value="UniProtKB-UniRule"/>
</dbReference>
<dbReference type="GO" id="GO:0010795">
    <property type="term" value="P:regulation of ubiquinone biosynthetic process"/>
    <property type="evidence" value="ECO:0007669"/>
    <property type="project" value="UniProtKB-UniRule"/>
</dbReference>
<dbReference type="GO" id="GO:0006744">
    <property type="term" value="P:ubiquinone biosynthetic process"/>
    <property type="evidence" value="ECO:0007669"/>
    <property type="project" value="UniProtKB-UniPathway"/>
</dbReference>
<dbReference type="CDD" id="cd13972">
    <property type="entry name" value="UbiB"/>
    <property type="match status" value="1"/>
</dbReference>
<dbReference type="HAMAP" id="MF_00414">
    <property type="entry name" value="UbiB"/>
    <property type="match status" value="1"/>
</dbReference>
<dbReference type="InterPro" id="IPR004147">
    <property type="entry name" value="ABC1_dom"/>
</dbReference>
<dbReference type="InterPro" id="IPR011009">
    <property type="entry name" value="Kinase-like_dom_sf"/>
</dbReference>
<dbReference type="InterPro" id="IPR010232">
    <property type="entry name" value="UbiB"/>
</dbReference>
<dbReference type="InterPro" id="IPR045308">
    <property type="entry name" value="UbiB_bact"/>
</dbReference>
<dbReference type="InterPro" id="IPR050154">
    <property type="entry name" value="UbiB_kinase"/>
</dbReference>
<dbReference type="NCBIfam" id="NF003404">
    <property type="entry name" value="PRK04750.1"/>
    <property type="match status" value="1"/>
</dbReference>
<dbReference type="NCBIfam" id="TIGR01982">
    <property type="entry name" value="UbiB"/>
    <property type="match status" value="1"/>
</dbReference>
<dbReference type="PANTHER" id="PTHR10566">
    <property type="entry name" value="CHAPERONE-ACTIVITY OF BC1 COMPLEX CABC1 -RELATED"/>
    <property type="match status" value="1"/>
</dbReference>
<dbReference type="PANTHER" id="PTHR10566:SF113">
    <property type="entry name" value="PROTEIN ACTIVITY OF BC1 COMPLEX KINASE 7, CHLOROPLASTIC"/>
    <property type="match status" value="1"/>
</dbReference>
<dbReference type="Pfam" id="PF03109">
    <property type="entry name" value="ABC1"/>
    <property type="match status" value="1"/>
</dbReference>
<dbReference type="SUPFAM" id="SSF56112">
    <property type="entry name" value="Protein kinase-like (PK-like)"/>
    <property type="match status" value="1"/>
</dbReference>
<protein>
    <recommendedName>
        <fullName evidence="1">Probable protein kinase UbiB</fullName>
        <ecNumber evidence="1">2.7.-.-</ecNumber>
    </recommendedName>
    <alternativeName>
        <fullName evidence="1">Ubiquinone biosynthesis protein UbiB</fullName>
    </alternativeName>
</protein>
<organism>
    <name type="scientific">Paraburkholderia phymatum (strain DSM 17167 / CIP 108236 / LMG 21445 / STM815)</name>
    <name type="common">Burkholderia phymatum</name>
    <dbReference type="NCBI Taxonomy" id="391038"/>
    <lineage>
        <taxon>Bacteria</taxon>
        <taxon>Pseudomonadati</taxon>
        <taxon>Pseudomonadota</taxon>
        <taxon>Betaproteobacteria</taxon>
        <taxon>Burkholderiales</taxon>
        <taxon>Burkholderiaceae</taxon>
        <taxon>Paraburkholderia</taxon>
    </lineage>
</organism>
<evidence type="ECO:0000255" key="1">
    <source>
        <dbReference type="HAMAP-Rule" id="MF_00414"/>
    </source>
</evidence>